<sequence>MKMNDLIHIRRAFHQIPELGFNEFKTQKLLLDTISNMEQTRLQIKTWKTAVFVRVEGRQDYTIAYRADMDGLPITEETGYSFASKHEGAMHACGHDFHMTIALGLLDHFASHEPECHLLFIFQPAEEGPGGAKPIIEADVLGAWQPDEIYALHIDPNLPVGSIATKPGLLFANTSELFIDFQGKGGHAAYPHTANDMVVACAHFVTQVQTVVARNIDPLDSAVVTLGVIAGGTKQNVIAATARLEGTIRTLSMASMEVVKSRLEAIAAGIEASFACKIAIDYGSNYCEVYNDPELAEAFAAFSKTRKGITFVEAEEAMTGEDFGYFLKQYPGVMFWLGVDSPYGLHDSRLQPSEEAIGIAIEHMVAFLSAKKPR</sequence>
<accession>Q5WF94</accession>
<name>DAPEL_SHOC1</name>
<keyword id="KW-0028">Amino-acid biosynthesis</keyword>
<keyword id="KW-0220">Diaminopimelate biosynthesis</keyword>
<keyword id="KW-0378">Hydrolase</keyword>
<keyword id="KW-0457">Lysine biosynthesis</keyword>
<keyword id="KW-1185">Reference proteome</keyword>
<organism>
    <name type="scientific">Shouchella clausii (strain KSM-K16)</name>
    <name type="common">Alkalihalobacillus clausii</name>
    <dbReference type="NCBI Taxonomy" id="66692"/>
    <lineage>
        <taxon>Bacteria</taxon>
        <taxon>Bacillati</taxon>
        <taxon>Bacillota</taxon>
        <taxon>Bacilli</taxon>
        <taxon>Bacillales</taxon>
        <taxon>Bacillaceae</taxon>
        <taxon>Shouchella</taxon>
    </lineage>
</organism>
<comment type="function">
    <text evidence="1">Catalyzes the conversion of N-acetyl-diaminopimelate to diaminopimelate and acetate.</text>
</comment>
<comment type="catalytic activity">
    <reaction evidence="1">
        <text>N-acetyl-(2S,6S)-2,6-diaminopimelate + H2O = (2S,6S)-2,6-diaminopimelate + acetate</text>
        <dbReference type="Rhea" id="RHEA:20405"/>
        <dbReference type="ChEBI" id="CHEBI:15377"/>
        <dbReference type="ChEBI" id="CHEBI:30089"/>
        <dbReference type="ChEBI" id="CHEBI:57609"/>
        <dbReference type="ChEBI" id="CHEBI:58767"/>
        <dbReference type="EC" id="3.5.1.47"/>
    </reaction>
</comment>
<comment type="pathway">
    <text evidence="1">Amino-acid biosynthesis; L-lysine biosynthesis via DAP pathway; LL-2,6-diaminopimelate from (S)-tetrahydrodipicolinate (acetylase route): step 3/3.</text>
</comment>
<comment type="similarity">
    <text evidence="1">Belongs to the peptidase M20A family. N-acetyldiaminopimelate deacetylase subfamily.</text>
</comment>
<reference key="1">
    <citation type="submission" date="2003-10" db="EMBL/GenBank/DDBJ databases">
        <title>The complete genome sequence of the alkaliphilic Bacillus clausii KSM-K16.</title>
        <authorList>
            <person name="Takaki Y."/>
            <person name="Kageyama Y."/>
            <person name="Shimamura S."/>
            <person name="Suzuki H."/>
            <person name="Nishi S."/>
            <person name="Hatada Y."/>
            <person name="Kawai S."/>
            <person name="Ito S."/>
            <person name="Horikoshi K."/>
        </authorList>
    </citation>
    <scope>NUCLEOTIDE SEQUENCE [LARGE SCALE GENOMIC DNA]</scope>
    <source>
        <strain>KSM-K16</strain>
    </source>
</reference>
<protein>
    <recommendedName>
        <fullName evidence="1">N-acetyldiaminopimelate deacetylase</fullName>
        <ecNumber evidence="1">3.5.1.47</ecNumber>
    </recommendedName>
</protein>
<gene>
    <name type="ordered locus">ABC2431</name>
</gene>
<proteinExistence type="inferred from homology"/>
<dbReference type="EC" id="3.5.1.47" evidence="1"/>
<dbReference type="EMBL" id="AP006627">
    <property type="protein sequence ID" value="BAD64966.1"/>
    <property type="molecule type" value="Genomic_DNA"/>
</dbReference>
<dbReference type="SMR" id="Q5WF94"/>
<dbReference type="STRING" id="66692.ABC2431"/>
<dbReference type="MEROPS" id="M20.A27"/>
<dbReference type="KEGG" id="bcl:ABC2431"/>
<dbReference type="eggNOG" id="COG1473">
    <property type="taxonomic scope" value="Bacteria"/>
</dbReference>
<dbReference type="HOGENOM" id="CLU_023257_0_1_9"/>
<dbReference type="UniPathway" id="UPA00034">
    <property type="reaction ID" value="UER00024"/>
</dbReference>
<dbReference type="Proteomes" id="UP000001168">
    <property type="component" value="Chromosome"/>
</dbReference>
<dbReference type="GO" id="GO:0050118">
    <property type="term" value="F:N-acetyldiaminopimelate deacetylase activity"/>
    <property type="evidence" value="ECO:0007669"/>
    <property type="project" value="UniProtKB-UniRule"/>
</dbReference>
<dbReference type="GO" id="GO:0019877">
    <property type="term" value="P:diaminopimelate biosynthetic process"/>
    <property type="evidence" value="ECO:0007669"/>
    <property type="project" value="UniProtKB-UniRule"/>
</dbReference>
<dbReference type="GO" id="GO:0009089">
    <property type="term" value="P:lysine biosynthetic process via diaminopimelate"/>
    <property type="evidence" value="ECO:0007669"/>
    <property type="project" value="UniProtKB-UniRule"/>
</dbReference>
<dbReference type="CDD" id="cd05670">
    <property type="entry name" value="M20_Acy1_YkuR-like"/>
    <property type="match status" value="1"/>
</dbReference>
<dbReference type="FunFam" id="3.30.70.360:FF:000001">
    <property type="entry name" value="N-acetyldiaminopimelate deacetylase"/>
    <property type="match status" value="1"/>
</dbReference>
<dbReference type="Gene3D" id="3.30.70.360">
    <property type="match status" value="1"/>
</dbReference>
<dbReference type="Gene3D" id="3.40.630.10">
    <property type="entry name" value="Zn peptidases"/>
    <property type="match status" value="1"/>
</dbReference>
<dbReference type="HAMAP" id="MF_01692">
    <property type="entry name" value="DapEL"/>
    <property type="match status" value="1"/>
</dbReference>
<dbReference type="InterPro" id="IPR023905">
    <property type="entry name" value="AcetylDAP_deacetylase"/>
</dbReference>
<dbReference type="InterPro" id="IPR017439">
    <property type="entry name" value="Amidohydrolase"/>
</dbReference>
<dbReference type="InterPro" id="IPR036264">
    <property type="entry name" value="Bact_exopeptidase_dim_dom"/>
</dbReference>
<dbReference type="InterPro" id="IPR002933">
    <property type="entry name" value="Peptidase_M20"/>
</dbReference>
<dbReference type="InterPro" id="IPR011650">
    <property type="entry name" value="Peptidase_M20_dimer"/>
</dbReference>
<dbReference type="NCBIfam" id="TIGR01891">
    <property type="entry name" value="amidohydrolases"/>
    <property type="match status" value="1"/>
</dbReference>
<dbReference type="PANTHER" id="PTHR11014:SF98">
    <property type="entry name" value="N-ACETYLDIAMINOPIMELATE DEACETYLASE"/>
    <property type="match status" value="1"/>
</dbReference>
<dbReference type="PANTHER" id="PTHR11014">
    <property type="entry name" value="PEPTIDASE M20 FAMILY MEMBER"/>
    <property type="match status" value="1"/>
</dbReference>
<dbReference type="Pfam" id="PF07687">
    <property type="entry name" value="M20_dimer"/>
    <property type="match status" value="1"/>
</dbReference>
<dbReference type="Pfam" id="PF01546">
    <property type="entry name" value="Peptidase_M20"/>
    <property type="match status" value="1"/>
</dbReference>
<dbReference type="PIRSF" id="PIRSF005962">
    <property type="entry name" value="Pept_M20D_amidohydro"/>
    <property type="match status" value="1"/>
</dbReference>
<dbReference type="SUPFAM" id="SSF55031">
    <property type="entry name" value="Bacterial exopeptidase dimerisation domain"/>
    <property type="match status" value="1"/>
</dbReference>
<dbReference type="SUPFAM" id="SSF53187">
    <property type="entry name" value="Zn-dependent exopeptidases"/>
    <property type="match status" value="1"/>
</dbReference>
<feature type="chain" id="PRO_0000376746" description="N-acetyldiaminopimelate deacetylase">
    <location>
        <begin position="1"/>
        <end position="374"/>
    </location>
</feature>
<feature type="active site" evidence="1">
    <location>
        <position position="68"/>
    </location>
</feature>
<feature type="active site" description="Proton acceptor" evidence="1">
    <location>
        <position position="127"/>
    </location>
</feature>
<evidence type="ECO:0000255" key="1">
    <source>
        <dbReference type="HAMAP-Rule" id="MF_01692"/>
    </source>
</evidence>